<comment type="similarity">
    <text evidence="1">Belongs to the UPF0502 family.</text>
</comment>
<accession>B0KLP4</accession>
<proteinExistence type="inferred from homology"/>
<organism>
    <name type="scientific">Pseudomonas putida (strain GB-1)</name>
    <dbReference type="NCBI Taxonomy" id="76869"/>
    <lineage>
        <taxon>Bacteria</taxon>
        <taxon>Pseudomonadati</taxon>
        <taxon>Pseudomonadota</taxon>
        <taxon>Gammaproteobacteria</taxon>
        <taxon>Pseudomonadales</taxon>
        <taxon>Pseudomonadaceae</taxon>
        <taxon>Pseudomonas</taxon>
    </lineage>
</organism>
<evidence type="ECO:0000255" key="1">
    <source>
        <dbReference type="HAMAP-Rule" id="MF_01584"/>
    </source>
</evidence>
<gene>
    <name type="ordered locus">PputGB1_3531</name>
</gene>
<dbReference type="EMBL" id="CP000926">
    <property type="protein sequence ID" value="ABY99422.1"/>
    <property type="molecule type" value="Genomic_DNA"/>
</dbReference>
<dbReference type="RefSeq" id="WP_012273142.1">
    <property type="nucleotide sequence ID" value="NC_010322.1"/>
</dbReference>
<dbReference type="SMR" id="B0KLP4"/>
<dbReference type="KEGG" id="ppg:PputGB1_3531"/>
<dbReference type="eggNOG" id="COG3132">
    <property type="taxonomic scope" value="Bacteria"/>
</dbReference>
<dbReference type="HOGENOM" id="CLU_057831_2_0_6"/>
<dbReference type="Proteomes" id="UP000002157">
    <property type="component" value="Chromosome"/>
</dbReference>
<dbReference type="Gene3D" id="1.10.10.10">
    <property type="entry name" value="Winged helix-like DNA-binding domain superfamily/Winged helix DNA-binding domain"/>
    <property type="match status" value="2"/>
</dbReference>
<dbReference type="HAMAP" id="MF_01584">
    <property type="entry name" value="UPF0502"/>
    <property type="match status" value="1"/>
</dbReference>
<dbReference type="InterPro" id="IPR007432">
    <property type="entry name" value="DUF480"/>
</dbReference>
<dbReference type="InterPro" id="IPR036388">
    <property type="entry name" value="WH-like_DNA-bd_sf"/>
</dbReference>
<dbReference type="InterPro" id="IPR036390">
    <property type="entry name" value="WH_DNA-bd_sf"/>
</dbReference>
<dbReference type="PANTHER" id="PTHR38768">
    <property type="entry name" value="UPF0502 PROTEIN YCEH"/>
    <property type="match status" value="1"/>
</dbReference>
<dbReference type="PANTHER" id="PTHR38768:SF1">
    <property type="entry name" value="UPF0502 PROTEIN YCEH"/>
    <property type="match status" value="1"/>
</dbReference>
<dbReference type="Pfam" id="PF04337">
    <property type="entry name" value="DUF480"/>
    <property type="match status" value="1"/>
</dbReference>
<dbReference type="SUPFAM" id="SSF46785">
    <property type="entry name" value="Winged helix' DNA-binding domain"/>
    <property type="match status" value="2"/>
</dbReference>
<reference key="1">
    <citation type="submission" date="2008-01" db="EMBL/GenBank/DDBJ databases">
        <title>Complete sequence of Pseudomonas putida GB-1.</title>
        <authorList>
            <consortium name="US DOE Joint Genome Institute"/>
            <person name="Copeland A."/>
            <person name="Lucas S."/>
            <person name="Lapidus A."/>
            <person name="Barry K."/>
            <person name="Glavina del Rio T."/>
            <person name="Dalin E."/>
            <person name="Tice H."/>
            <person name="Pitluck S."/>
            <person name="Bruce D."/>
            <person name="Goodwin L."/>
            <person name="Chertkov O."/>
            <person name="Brettin T."/>
            <person name="Detter J.C."/>
            <person name="Han C."/>
            <person name="Kuske C.R."/>
            <person name="Schmutz J."/>
            <person name="Larimer F."/>
            <person name="Land M."/>
            <person name="Hauser L."/>
            <person name="Kyrpides N."/>
            <person name="Kim E."/>
            <person name="McCarthy J.K."/>
            <person name="Richardson P."/>
        </authorList>
    </citation>
    <scope>NUCLEOTIDE SEQUENCE [LARGE SCALE GENOMIC DNA]</scope>
    <source>
        <strain>GB-1</strain>
    </source>
</reference>
<protein>
    <recommendedName>
        <fullName evidence="1">UPF0502 protein PputGB1_3531</fullName>
    </recommendedName>
</protein>
<sequence>MSEHETAGEGRFNSIEIRVLGSLIEKQATSPESYPLTLNALVLACNQKTSREPVMNLTQGQVGQALRALEGQDLTRLQMGSRADRWEQRVDKALELVPAQLVLMGLMFLRGPQTLNELLTRSNRLHDFDDTEQIQHQLERLISRDLALHLPRQAGQREDRYTHALGDPAEIEAILAARQQEGGARSSGASVSEERIEALEARIAALEARLAELEG</sequence>
<feature type="chain" id="PRO_1000087945" description="UPF0502 protein PputGB1_3531">
    <location>
        <begin position="1"/>
        <end position="215"/>
    </location>
</feature>
<name>Y3531_PSEPG</name>